<accession>P0DA85</accession>
<accession>P69947</accession>
<accession>P82477</accession>
<name>EFG_STRPQ</name>
<reference key="1">
    <citation type="journal article" date="2003" name="Genome Res.">
        <title>Genome sequence of an M3 strain of Streptococcus pyogenes reveals a large-scale genomic rearrangement in invasive strains and new insights into phage evolution.</title>
        <authorList>
            <person name="Nakagawa I."/>
            <person name="Kurokawa K."/>
            <person name="Yamashita A."/>
            <person name="Nakata M."/>
            <person name="Tomiyasu Y."/>
            <person name="Okahashi N."/>
            <person name="Kawabata S."/>
            <person name="Yamazaki K."/>
            <person name="Shiba T."/>
            <person name="Yasunaga T."/>
            <person name="Hayashi H."/>
            <person name="Hattori M."/>
            <person name="Hamada S."/>
        </authorList>
    </citation>
    <scope>NUCLEOTIDE SEQUENCE [LARGE SCALE GENOMIC DNA]</scope>
    <source>
        <strain>SSI-1</strain>
    </source>
</reference>
<organism>
    <name type="scientific">Streptococcus pyogenes serotype M3 (strain SSI-1)</name>
    <dbReference type="NCBI Taxonomy" id="193567"/>
    <lineage>
        <taxon>Bacteria</taxon>
        <taxon>Bacillati</taxon>
        <taxon>Bacillota</taxon>
        <taxon>Bacilli</taxon>
        <taxon>Lactobacillales</taxon>
        <taxon>Streptococcaceae</taxon>
        <taxon>Streptococcus</taxon>
    </lineage>
</organism>
<feature type="initiator methionine" description="Removed" evidence="1">
    <location>
        <position position="1"/>
    </location>
</feature>
<feature type="chain" id="PRO_0000411330" description="Elongation factor G">
    <location>
        <begin position="2"/>
        <end position="692"/>
    </location>
</feature>
<feature type="domain" description="tr-type G">
    <location>
        <begin position="8"/>
        <end position="282"/>
    </location>
</feature>
<feature type="binding site" evidence="1">
    <location>
        <begin position="17"/>
        <end position="24"/>
    </location>
    <ligand>
        <name>GTP</name>
        <dbReference type="ChEBI" id="CHEBI:37565"/>
    </ligand>
</feature>
<feature type="binding site" evidence="1">
    <location>
        <begin position="81"/>
        <end position="85"/>
    </location>
    <ligand>
        <name>GTP</name>
        <dbReference type="ChEBI" id="CHEBI:37565"/>
    </ligand>
</feature>
<feature type="binding site" evidence="1">
    <location>
        <begin position="135"/>
        <end position="138"/>
    </location>
    <ligand>
        <name>GTP</name>
        <dbReference type="ChEBI" id="CHEBI:37565"/>
    </ligand>
</feature>
<proteinExistence type="inferred from homology"/>
<keyword id="KW-0963">Cytoplasm</keyword>
<keyword id="KW-0251">Elongation factor</keyword>
<keyword id="KW-0342">GTP-binding</keyword>
<keyword id="KW-0547">Nucleotide-binding</keyword>
<keyword id="KW-0648">Protein biosynthesis</keyword>
<comment type="function">
    <text evidence="1">Catalyzes the GTP-dependent ribosomal translocation step during translation elongation. During this step, the ribosome changes from the pre-translocational (PRE) to the post-translocational (POST) state as the newly formed A-site-bound peptidyl-tRNA and P-site-bound deacylated tRNA move to the P and E sites, respectively. Catalyzes the coordinated movement of the two tRNA molecules, the mRNA and conformational changes in the ribosome (By similarity).</text>
</comment>
<comment type="subcellular location">
    <subcellularLocation>
        <location evidence="1">Cytoplasm</location>
    </subcellularLocation>
</comment>
<comment type="similarity">
    <text evidence="2">Belongs to the TRAFAC class translation factor GTPase superfamily. Classic translation factor GTPase family. EF-G/EF-2 subfamily.</text>
</comment>
<evidence type="ECO:0000250" key="1"/>
<evidence type="ECO:0000305" key="2"/>
<sequence>MAREFSLAKTRNIGIMAHVDAGKTTTTERILYYTGKIHKIGETHEGASQMDWMEQEQERGITITSAATTAQWDGHRVNIIDTPGHVDFTIEVQRSLRVLDGAVTVLDSQSGVEPQTETVWRQATEYGVPRIVFANKMDKIGADFLYSVQTLHDRLQANAHPIQLPIGAEDDFRGIIDLIKMKAEIYTNDLGTDILEEDIPEEYLEQAQEYREKLIEAVAETDEDLMMKYLEGEEITNDELIAGIRKATINVEFFPVLCGSAFKNKGVQLMLDAVIAYLPSPLDIPAIKGVNPDTDAEEERPASDEEPFAALAFKIMTDPFVGRLTFFRVYSGVLNSGSYVMNTSKGKRERIGRILQMHANSRQEIETVYAGDIAAAVGLKDTTTGDSLTDEKAKVILESIEVPEPVIQLMVEPKSKADQDKMGVALQKLAEEDPTFRVETNVETGETVIAGMGELHLDVLVDRMKREFKVEANVGAPQVSYRETFRASTQARGFFKRQSGGKGQFGDVWIEFTPNEEGKGFEFENAIVGGVVPREFIPAVEKGLIESMANGVLAGYPMVDVKAKLYDGSYHDVDSSETAFKIAASLALKEAAKSAQPAILEPMMLVTITAPEDNLGDVMGHVTARRGRVDGMEAHGNSQIVRAYVPLAEMFGYATVLRSATQGRGTFMMVFDHYEDVPKSVQEEIIKKNKGE</sequence>
<gene>
    <name type="primary">fus</name>
    <name type="synonym">fusA</name>
    <name type="ordered locus">SPs0206</name>
</gene>
<dbReference type="EMBL" id="BA000034">
    <property type="protein sequence ID" value="BAC63301.1"/>
    <property type="molecule type" value="Genomic_DNA"/>
</dbReference>
<dbReference type="RefSeq" id="WP_002986045.1">
    <property type="nucleotide sequence ID" value="NC_004606.1"/>
</dbReference>
<dbReference type="SMR" id="P0DA85"/>
<dbReference type="GeneID" id="69900199"/>
<dbReference type="KEGG" id="sps:SPs0206"/>
<dbReference type="HOGENOM" id="CLU_002794_4_1_9"/>
<dbReference type="GO" id="GO:0005737">
    <property type="term" value="C:cytoplasm"/>
    <property type="evidence" value="ECO:0007669"/>
    <property type="project" value="UniProtKB-SubCell"/>
</dbReference>
<dbReference type="GO" id="GO:0005525">
    <property type="term" value="F:GTP binding"/>
    <property type="evidence" value="ECO:0007669"/>
    <property type="project" value="UniProtKB-UniRule"/>
</dbReference>
<dbReference type="GO" id="GO:0003924">
    <property type="term" value="F:GTPase activity"/>
    <property type="evidence" value="ECO:0007669"/>
    <property type="project" value="InterPro"/>
</dbReference>
<dbReference type="GO" id="GO:0003746">
    <property type="term" value="F:translation elongation factor activity"/>
    <property type="evidence" value="ECO:0007669"/>
    <property type="project" value="UniProtKB-UniRule"/>
</dbReference>
<dbReference type="GO" id="GO:0032790">
    <property type="term" value="P:ribosome disassembly"/>
    <property type="evidence" value="ECO:0007669"/>
    <property type="project" value="TreeGrafter"/>
</dbReference>
<dbReference type="CDD" id="cd01886">
    <property type="entry name" value="EF-G"/>
    <property type="match status" value="1"/>
</dbReference>
<dbReference type="CDD" id="cd16262">
    <property type="entry name" value="EFG_III"/>
    <property type="match status" value="1"/>
</dbReference>
<dbReference type="CDD" id="cd01434">
    <property type="entry name" value="EFG_mtEFG1_IV"/>
    <property type="match status" value="1"/>
</dbReference>
<dbReference type="CDD" id="cd03713">
    <property type="entry name" value="EFG_mtEFG_C"/>
    <property type="match status" value="1"/>
</dbReference>
<dbReference type="CDD" id="cd04088">
    <property type="entry name" value="EFG_mtEFG_II"/>
    <property type="match status" value="1"/>
</dbReference>
<dbReference type="FunFam" id="2.40.30.10:FF:000006">
    <property type="entry name" value="Elongation factor G"/>
    <property type="match status" value="1"/>
</dbReference>
<dbReference type="FunFam" id="3.30.230.10:FF:000003">
    <property type="entry name" value="Elongation factor G"/>
    <property type="match status" value="1"/>
</dbReference>
<dbReference type="FunFam" id="3.30.70.240:FF:000001">
    <property type="entry name" value="Elongation factor G"/>
    <property type="match status" value="1"/>
</dbReference>
<dbReference type="FunFam" id="3.30.70.870:FF:000001">
    <property type="entry name" value="Elongation factor G"/>
    <property type="match status" value="1"/>
</dbReference>
<dbReference type="FunFam" id="3.40.50.300:FF:000029">
    <property type="entry name" value="Elongation factor G"/>
    <property type="match status" value="1"/>
</dbReference>
<dbReference type="Gene3D" id="3.30.230.10">
    <property type="match status" value="1"/>
</dbReference>
<dbReference type="Gene3D" id="3.30.70.240">
    <property type="match status" value="1"/>
</dbReference>
<dbReference type="Gene3D" id="3.30.70.870">
    <property type="entry name" value="Elongation Factor G (Translational Gtpase), domain 3"/>
    <property type="match status" value="1"/>
</dbReference>
<dbReference type="Gene3D" id="3.40.50.300">
    <property type="entry name" value="P-loop containing nucleotide triphosphate hydrolases"/>
    <property type="match status" value="1"/>
</dbReference>
<dbReference type="Gene3D" id="2.40.30.10">
    <property type="entry name" value="Translation factors"/>
    <property type="match status" value="1"/>
</dbReference>
<dbReference type="HAMAP" id="MF_00054_B">
    <property type="entry name" value="EF_G_EF_2_B"/>
    <property type="match status" value="1"/>
</dbReference>
<dbReference type="InterPro" id="IPR041095">
    <property type="entry name" value="EFG_II"/>
</dbReference>
<dbReference type="InterPro" id="IPR009022">
    <property type="entry name" value="EFG_III"/>
</dbReference>
<dbReference type="InterPro" id="IPR035647">
    <property type="entry name" value="EFG_III/V"/>
</dbReference>
<dbReference type="InterPro" id="IPR047872">
    <property type="entry name" value="EFG_IV"/>
</dbReference>
<dbReference type="InterPro" id="IPR035649">
    <property type="entry name" value="EFG_V"/>
</dbReference>
<dbReference type="InterPro" id="IPR000640">
    <property type="entry name" value="EFG_V-like"/>
</dbReference>
<dbReference type="InterPro" id="IPR004161">
    <property type="entry name" value="EFTu-like_2"/>
</dbReference>
<dbReference type="InterPro" id="IPR031157">
    <property type="entry name" value="G_TR_CS"/>
</dbReference>
<dbReference type="InterPro" id="IPR027417">
    <property type="entry name" value="P-loop_NTPase"/>
</dbReference>
<dbReference type="InterPro" id="IPR020568">
    <property type="entry name" value="Ribosomal_Su5_D2-typ_SF"/>
</dbReference>
<dbReference type="InterPro" id="IPR014721">
    <property type="entry name" value="Ribsml_uS5_D2-typ_fold_subgr"/>
</dbReference>
<dbReference type="InterPro" id="IPR005225">
    <property type="entry name" value="Small_GTP-bd"/>
</dbReference>
<dbReference type="InterPro" id="IPR000795">
    <property type="entry name" value="T_Tr_GTP-bd_dom"/>
</dbReference>
<dbReference type="InterPro" id="IPR009000">
    <property type="entry name" value="Transl_B-barrel_sf"/>
</dbReference>
<dbReference type="InterPro" id="IPR004540">
    <property type="entry name" value="Transl_elong_EFG/EF2"/>
</dbReference>
<dbReference type="InterPro" id="IPR005517">
    <property type="entry name" value="Transl_elong_EFG/EF2_IV"/>
</dbReference>
<dbReference type="NCBIfam" id="TIGR00484">
    <property type="entry name" value="EF-G"/>
    <property type="match status" value="1"/>
</dbReference>
<dbReference type="NCBIfam" id="NF009379">
    <property type="entry name" value="PRK12740.1-3"/>
    <property type="match status" value="1"/>
</dbReference>
<dbReference type="NCBIfam" id="NF009381">
    <property type="entry name" value="PRK12740.1-5"/>
    <property type="match status" value="1"/>
</dbReference>
<dbReference type="NCBIfam" id="TIGR00231">
    <property type="entry name" value="small_GTP"/>
    <property type="match status" value="1"/>
</dbReference>
<dbReference type="PANTHER" id="PTHR43261:SF1">
    <property type="entry name" value="RIBOSOME-RELEASING FACTOR 2, MITOCHONDRIAL"/>
    <property type="match status" value="1"/>
</dbReference>
<dbReference type="PANTHER" id="PTHR43261">
    <property type="entry name" value="TRANSLATION ELONGATION FACTOR G-RELATED"/>
    <property type="match status" value="1"/>
</dbReference>
<dbReference type="Pfam" id="PF00679">
    <property type="entry name" value="EFG_C"/>
    <property type="match status" value="1"/>
</dbReference>
<dbReference type="Pfam" id="PF14492">
    <property type="entry name" value="EFG_III"/>
    <property type="match status" value="1"/>
</dbReference>
<dbReference type="Pfam" id="PF03764">
    <property type="entry name" value="EFG_IV"/>
    <property type="match status" value="1"/>
</dbReference>
<dbReference type="Pfam" id="PF00009">
    <property type="entry name" value="GTP_EFTU"/>
    <property type="match status" value="1"/>
</dbReference>
<dbReference type="Pfam" id="PF03144">
    <property type="entry name" value="GTP_EFTU_D2"/>
    <property type="match status" value="1"/>
</dbReference>
<dbReference type="PRINTS" id="PR00315">
    <property type="entry name" value="ELONGATNFCT"/>
</dbReference>
<dbReference type="SMART" id="SM00838">
    <property type="entry name" value="EFG_C"/>
    <property type="match status" value="1"/>
</dbReference>
<dbReference type="SMART" id="SM00889">
    <property type="entry name" value="EFG_IV"/>
    <property type="match status" value="1"/>
</dbReference>
<dbReference type="SUPFAM" id="SSF54980">
    <property type="entry name" value="EF-G C-terminal domain-like"/>
    <property type="match status" value="2"/>
</dbReference>
<dbReference type="SUPFAM" id="SSF52540">
    <property type="entry name" value="P-loop containing nucleoside triphosphate hydrolases"/>
    <property type="match status" value="1"/>
</dbReference>
<dbReference type="SUPFAM" id="SSF54211">
    <property type="entry name" value="Ribosomal protein S5 domain 2-like"/>
    <property type="match status" value="1"/>
</dbReference>
<dbReference type="SUPFAM" id="SSF50447">
    <property type="entry name" value="Translation proteins"/>
    <property type="match status" value="1"/>
</dbReference>
<dbReference type="PROSITE" id="PS00301">
    <property type="entry name" value="G_TR_1"/>
    <property type="match status" value="1"/>
</dbReference>
<dbReference type="PROSITE" id="PS51722">
    <property type="entry name" value="G_TR_2"/>
    <property type="match status" value="1"/>
</dbReference>
<protein>
    <recommendedName>
        <fullName>Elongation factor G</fullName>
        <shortName>EF-G</shortName>
    </recommendedName>
</protein>